<comment type="catalytic activity">
    <reaction evidence="1">
        <text>tRNA(Leu) + L-leucine + ATP = L-leucyl-tRNA(Leu) + AMP + diphosphate</text>
        <dbReference type="Rhea" id="RHEA:11688"/>
        <dbReference type="Rhea" id="RHEA-COMP:9613"/>
        <dbReference type="Rhea" id="RHEA-COMP:9622"/>
        <dbReference type="ChEBI" id="CHEBI:30616"/>
        <dbReference type="ChEBI" id="CHEBI:33019"/>
        <dbReference type="ChEBI" id="CHEBI:57427"/>
        <dbReference type="ChEBI" id="CHEBI:78442"/>
        <dbReference type="ChEBI" id="CHEBI:78494"/>
        <dbReference type="ChEBI" id="CHEBI:456215"/>
        <dbReference type="EC" id="6.1.1.4"/>
    </reaction>
</comment>
<comment type="subcellular location">
    <subcellularLocation>
        <location evidence="1">Cytoplasm</location>
    </subcellularLocation>
</comment>
<comment type="similarity">
    <text evidence="1">Belongs to the class-I aminoacyl-tRNA synthetase family.</text>
</comment>
<comment type="sequence caution" evidence="2">
    <conflict type="erroneous initiation">
        <sequence resource="EMBL-CDS" id="ABO01529"/>
    </conflict>
</comment>
<gene>
    <name evidence="1" type="primary">leuS</name>
    <name type="ordered locus">Mjls_5765</name>
</gene>
<name>SYL_MYCSJ</name>
<sequence>MTETPTAQPDRAADADTPQHRYTAELAGQIEGAWQQTWAVEGTFNVPNPVGELAPPDGTVPADKMFVQDMFPYPSGEGLHVGHPLGYIATDVYARYYRMTGRNVLHALGFDAFGLPAEQYAVQTGTHPRTRTEANIVNFRRQLGRLGLGHDTRRSFSTTDVDFYTWTQWIFLQIYNAWFDRDANRARPIAELIGEFESGVRTLDDGRPWSELSAGERADVVDSYRLVYRADSMVNWCPGLGTVLANEEVTADGRSDRGNFPVFRKRLRQWMMRITAYSDRLLEDLEVLDWPDKVKTMQRNWIGRSTGASVQFGTDAGDIEVFTTRPDTLFGATYLVLAPEHPLVEQLAAEQWPDDVDGRWTFGATTPREAVAAYRASIAAKSDLERQENKTKTGAFLGAYATNPANGQQVPIFIADYVLIGYGTGAIMAVPGHDQRDWEFAHEFGLPVVEVISGGDISEAAYAGDGLLVNSDYLDGLDVAAAKAAITDRLVADGRGRARVEYKLRDWLFARQRYWGEPFPIVYDSDGRPHPLPESALPVELPDVPDYSPVLFDPDDADSEPNPPLNKATDWVHVELDLGDGLQTYTRDTNVMPQWAGSSWYELRYTDPLNKEALCAKENEAYWMGPRPAEHGPDDPGGVDLYVGGVEHAVLHLLYSRFWHKVLYDLGHVSSREPYRRLVNQGYIQAFAYTDSRGSYVPAAEVVERDGKFWFEGAEVFQEFGKIGKSLKNSVSPDEICDNYGADTLRVYEMSMGPLEASRPWATKDVVGAHRFLQRVWRLVVDEQSGAVRVANHEALDTDTLRALHRTVAGVSEDYAALRNNTAAAKLIEYTNHLTKEGVTARAAIEPLVLMVAPLAPHLAEELWRRLGHDTSLAHGPFPVADPQYLVTDTVEYPVQVNGKVRSRITVDADAGKDTLEAAALADEKVQAFLNGATPKKVIVVPGRLVNLVV</sequence>
<accession>A3Q8Q1</accession>
<feature type="chain" id="PRO_0000334776" description="Leucine--tRNA ligase">
    <location>
        <begin position="1"/>
        <end position="950"/>
    </location>
</feature>
<feature type="short sequence motif" description="'HIGH' region">
    <location>
        <begin position="72"/>
        <end position="83"/>
    </location>
</feature>
<feature type="short sequence motif" description="'KMSKS' region">
    <location>
        <begin position="722"/>
        <end position="726"/>
    </location>
</feature>
<feature type="binding site" evidence="1">
    <location>
        <position position="725"/>
    </location>
    <ligand>
        <name>ATP</name>
        <dbReference type="ChEBI" id="CHEBI:30616"/>
    </ligand>
</feature>
<evidence type="ECO:0000255" key="1">
    <source>
        <dbReference type="HAMAP-Rule" id="MF_00049"/>
    </source>
</evidence>
<evidence type="ECO:0000305" key="2"/>
<proteinExistence type="inferred from homology"/>
<dbReference type="EC" id="6.1.1.4" evidence="1"/>
<dbReference type="EMBL" id="CP000580">
    <property type="protein sequence ID" value="ABO01529.1"/>
    <property type="status" value="ALT_INIT"/>
    <property type="molecule type" value="Genomic_DNA"/>
</dbReference>
<dbReference type="SMR" id="A3Q8Q1"/>
<dbReference type="KEGG" id="mjl:Mjls_5765"/>
<dbReference type="HOGENOM" id="CLU_004427_0_0_11"/>
<dbReference type="BioCyc" id="MSP164757:G1G8C-5827-MONOMER"/>
<dbReference type="GO" id="GO:0005829">
    <property type="term" value="C:cytosol"/>
    <property type="evidence" value="ECO:0007669"/>
    <property type="project" value="TreeGrafter"/>
</dbReference>
<dbReference type="GO" id="GO:0002161">
    <property type="term" value="F:aminoacyl-tRNA deacylase activity"/>
    <property type="evidence" value="ECO:0007669"/>
    <property type="project" value="InterPro"/>
</dbReference>
<dbReference type="GO" id="GO:0005524">
    <property type="term" value="F:ATP binding"/>
    <property type="evidence" value="ECO:0007669"/>
    <property type="project" value="UniProtKB-UniRule"/>
</dbReference>
<dbReference type="GO" id="GO:0004823">
    <property type="term" value="F:leucine-tRNA ligase activity"/>
    <property type="evidence" value="ECO:0007669"/>
    <property type="project" value="UniProtKB-UniRule"/>
</dbReference>
<dbReference type="GO" id="GO:0006429">
    <property type="term" value="P:leucyl-tRNA aminoacylation"/>
    <property type="evidence" value="ECO:0007669"/>
    <property type="project" value="UniProtKB-UniRule"/>
</dbReference>
<dbReference type="CDD" id="cd07958">
    <property type="entry name" value="Anticodon_Ia_Leu_BEm"/>
    <property type="match status" value="1"/>
</dbReference>
<dbReference type="FunFam" id="3.10.20.590:FF:000001">
    <property type="entry name" value="Leucine--tRNA ligase"/>
    <property type="match status" value="1"/>
</dbReference>
<dbReference type="FunFam" id="3.40.50.620:FF:000060">
    <property type="entry name" value="Leucine--tRNA ligase"/>
    <property type="match status" value="1"/>
</dbReference>
<dbReference type="FunFam" id="3.40.50.620:FF:000087">
    <property type="entry name" value="Leucine--tRNA ligase"/>
    <property type="match status" value="1"/>
</dbReference>
<dbReference type="FunFam" id="3.90.740.10:FF:000017">
    <property type="entry name" value="Leucine--tRNA ligase"/>
    <property type="match status" value="1"/>
</dbReference>
<dbReference type="FunFam" id="1.10.730.10:FF:000011">
    <property type="entry name" value="Leucine--tRNA ligase chloroplastic/mitochondrial"/>
    <property type="match status" value="1"/>
</dbReference>
<dbReference type="Gene3D" id="3.40.50.620">
    <property type="entry name" value="HUPs"/>
    <property type="match status" value="3"/>
</dbReference>
<dbReference type="Gene3D" id="1.10.730.10">
    <property type="entry name" value="Isoleucyl-tRNA Synthetase, Domain 1"/>
    <property type="match status" value="1"/>
</dbReference>
<dbReference type="HAMAP" id="MF_00049_B">
    <property type="entry name" value="Leu_tRNA_synth_B"/>
    <property type="match status" value="1"/>
</dbReference>
<dbReference type="InterPro" id="IPR001412">
    <property type="entry name" value="aa-tRNA-synth_I_CS"/>
</dbReference>
<dbReference type="InterPro" id="IPR002302">
    <property type="entry name" value="Leu-tRNA-ligase"/>
</dbReference>
<dbReference type="InterPro" id="IPR025709">
    <property type="entry name" value="Leu_tRNA-synth_edit"/>
</dbReference>
<dbReference type="InterPro" id="IPR013155">
    <property type="entry name" value="M/V/L/I-tRNA-synth_anticd-bd"/>
</dbReference>
<dbReference type="InterPro" id="IPR015413">
    <property type="entry name" value="Methionyl/Leucyl_tRNA_Synth"/>
</dbReference>
<dbReference type="InterPro" id="IPR014729">
    <property type="entry name" value="Rossmann-like_a/b/a_fold"/>
</dbReference>
<dbReference type="InterPro" id="IPR009080">
    <property type="entry name" value="tRNAsynth_Ia_anticodon-bd"/>
</dbReference>
<dbReference type="InterPro" id="IPR009008">
    <property type="entry name" value="Val/Leu/Ile-tRNA-synth_edit"/>
</dbReference>
<dbReference type="NCBIfam" id="TIGR00396">
    <property type="entry name" value="leuS_bact"/>
    <property type="match status" value="1"/>
</dbReference>
<dbReference type="PANTHER" id="PTHR43740:SF2">
    <property type="entry name" value="LEUCINE--TRNA LIGASE, MITOCHONDRIAL"/>
    <property type="match status" value="1"/>
</dbReference>
<dbReference type="PANTHER" id="PTHR43740">
    <property type="entry name" value="LEUCYL-TRNA SYNTHETASE"/>
    <property type="match status" value="1"/>
</dbReference>
<dbReference type="Pfam" id="PF08264">
    <property type="entry name" value="Anticodon_1"/>
    <property type="match status" value="1"/>
</dbReference>
<dbReference type="Pfam" id="PF13603">
    <property type="entry name" value="tRNA-synt_1_2"/>
    <property type="match status" value="1"/>
</dbReference>
<dbReference type="Pfam" id="PF09334">
    <property type="entry name" value="tRNA-synt_1g"/>
    <property type="match status" value="1"/>
</dbReference>
<dbReference type="PRINTS" id="PR00985">
    <property type="entry name" value="TRNASYNTHLEU"/>
</dbReference>
<dbReference type="SUPFAM" id="SSF47323">
    <property type="entry name" value="Anticodon-binding domain of a subclass of class I aminoacyl-tRNA synthetases"/>
    <property type="match status" value="1"/>
</dbReference>
<dbReference type="SUPFAM" id="SSF52374">
    <property type="entry name" value="Nucleotidylyl transferase"/>
    <property type="match status" value="1"/>
</dbReference>
<dbReference type="SUPFAM" id="SSF50677">
    <property type="entry name" value="ValRS/IleRS/LeuRS editing domain"/>
    <property type="match status" value="1"/>
</dbReference>
<dbReference type="PROSITE" id="PS00178">
    <property type="entry name" value="AA_TRNA_LIGASE_I"/>
    <property type="match status" value="1"/>
</dbReference>
<keyword id="KW-0030">Aminoacyl-tRNA synthetase</keyword>
<keyword id="KW-0067">ATP-binding</keyword>
<keyword id="KW-0963">Cytoplasm</keyword>
<keyword id="KW-0436">Ligase</keyword>
<keyword id="KW-0547">Nucleotide-binding</keyword>
<keyword id="KW-0648">Protein biosynthesis</keyword>
<protein>
    <recommendedName>
        <fullName evidence="1">Leucine--tRNA ligase</fullName>
        <ecNumber evidence="1">6.1.1.4</ecNumber>
    </recommendedName>
    <alternativeName>
        <fullName evidence="1">Leucyl-tRNA synthetase</fullName>
        <shortName evidence="1">LeuRS</shortName>
    </alternativeName>
</protein>
<organism>
    <name type="scientific">Mycobacterium sp. (strain JLS)</name>
    <dbReference type="NCBI Taxonomy" id="164757"/>
    <lineage>
        <taxon>Bacteria</taxon>
        <taxon>Bacillati</taxon>
        <taxon>Actinomycetota</taxon>
        <taxon>Actinomycetes</taxon>
        <taxon>Mycobacteriales</taxon>
        <taxon>Mycobacteriaceae</taxon>
        <taxon>Mycobacterium</taxon>
    </lineage>
</organism>
<reference key="1">
    <citation type="submission" date="2007-02" db="EMBL/GenBank/DDBJ databases">
        <title>Complete sequence of Mycobacterium sp. JLS.</title>
        <authorList>
            <consortium name="US DOE Joint Genome Institute"/>
            <person name="Copeland A."/>
            <person name="Lucas S."/>
            <person name="Lapidus A."/>
            <person name="Barry K."/>
            <person name="Detter J.C."/>
            <person name="Glavina del Rio T."/>
            <person name="Hammon N."/>
            <person name="Israni S."/>
            <person name="Dalin E."/>
            <person name="Tice H."/>
            <person name="Pitluck S."/>
            <person name="Chain P."/>
            <person name="Malfatti S."/>
            <person name="Shin M."/>
            <person name="Vergez L."/>
            <person name="Schmutz J."/>
            <person name="Larimer F."/>
            <person name="Land M."/>
            <person name="Hauser L."/>
            <person name="Kyrpides N."/>
            <person name="Mikhailova N."/>
            <person name="Miller C.D."/>
            <person name="Anderson A.J."/>
            <person name="Sims R.C."/>
            <person name="Richardson P."/>
        </authorList>
    </citation>
    <scope>NUCLEOTIDE SEQUENCE [LARGE SCALE GENOMIC DNA]</scope>
    <source>
        <strain>JLS</strain>
    </source>
</reference>